<evidence type="ECO:0000250" key="1">
    <source>
        <dbReference type="UniProtKB" id="Q99J77"/>
    </source>
</evidence>
<evidence type="ECO:0000255" key="2">
    <source>
        <dbReference type="PROSITE-ProRule" id="PRU00021"/>
    </source>
</evidence>
<evidence type="ECO:0000269" key="3">
    <source>
    </source>
</evidence>
<evidence type="ECO:0000269" key="4">
    <source>
    </source>
</evidence>
<evidence type="ECO:0000269" key="5">
    <source>
    </source>
</evidence>
<evidence type="ECO:0000269" key="6">
    <source ref="6"/>
</evidence>
<evidence type="ECO:0000303" key="7">
    <source>
    </source>
</evidence>
<evidence type="ECO:0000303" key="8">
    <source>
    </source>
</evidence>
<evidence type="ECO:0000303" key="9">
    <source>
    </source>
</evidence>
<evidence type="ECO:0000305" key="10"/>
<evidence type="ECO:0000305" key="11">
    <source>
    </source>
</evidence>
<evidence type="ECO:0000312" key="12">
    <source>
        <dbReference type="HGNC" id="HGNC:19237"/>
    </source>
</evidence>
<evidence type="ECO:0007744" key="13">
    <source>
    </source>
</evidence>
<evidence type="ECO:0007829" key="14">
    <source>
        <dbReference type="PDB" id="1WVO"/>
    </source>
</evidence>
<reference key="1">
    <citation type="journal article" date="2000" name="J. Biol. Chem.">
        <title>Cloning and expression of the human N-acetylneuraminic acid phosphate synthase gene with 2-keto-3-deoxy-D-glycero-D-galacto-nononic acid biosynthetic ability.</title>
        <authorList>
            <person name="Lawrence S.M."/>
            <person name="Huddleston K.A."/>
            <person name="Pitts L.R."/>
            <person name="Nguyen N."/>
            <person name="Lee Y.C."/>
            <person name="Vann W.F."/>
            <person name="Coleman T.A."/>
            <person name="Betenbaugh M.J."/>
        </authorList>
    </citation>
    <scope>NUCLEOTIDE SEQUENCE [MRNA]</scope>
    <scope>FUNCTION</scope>
    <scope>CATALYTIC ACTIVITY</scope>
    <scope>TISSUE SPECIFICITY</scope>
    <source>
        <tissue>Liver</tissue>
    </source>
</reference>
<reference key="2">
    <citation type="journal article" date="2004" name="Nat. Genet.">
        <title>Complete sequencing and characterization of 21,243 full-length human cDNAs.</title>
        <authorList>
            <person name="Ota T."/>
            <person name="Suzuki Y."/>
            <person name="Nishikawa T."/>
            <person name="Otsuki T."/>
            <person name="Sugiyama T."/>
            <person name="Irie R."/>
            <person name="Wakamatsu A."/>
            <person name="Hayashi K."/>
            <person name="Sato H."/>
            <person name="Nagai K."/>
            <person name="Kimura K."/>
            <person name="Makita H."/>
            <person name="Sekine M."/>
            <person name="Obayashi M."/>
            <person name="Nishi T."/>
            <person name="Shibahara T."/>
            <person name="Tanaka T."/>
            <person name="Ishii S."/>
            <person name="Yamamoto J."/>
            <person name="Saito K."/>
            <person name="Kawai Y."/>
            <person name="Isono Y."/>
            <person name="Nakamura Y."/>
            <person name="Nagahari K."/>
            <person name="Murakami K."/>
            <person name="Yasuda T."/>
            <person name="Iwayanagi T."/>
            <person name="Wagatsuma M."/>
            <person name="Shiratori A."/>
            <person name="Sudo H."/>
            <person name="Hosoiri T."/>
            <person name="Kaku Y."/>
            <person name="Kodaira H."/>
            <person name="Kondo H."/>
            <person name="Sugawara M."/>
            <person name="Takahashi M."/>
            <person name="Kanda K."/>
            <person name="Yokoi T."/>
            <person name="Furuya T."/>
            <person name="Kikkawa E."/>
            <person name="Omura Y."/>
            <person name="Abe K."/>
            <person name="Kamihara K."/>
            <person name="Katsuta N."/>
            <person name="Sato K."/>
            <person name="Tanikawa M."/>
            <person name="Yamazaki M."/>
            <person name="Ninomiya K."/>
            <person name="Ishibashi T."/>
            <person name="Yamashita H."/>
            <person name="Murakawa K."/>
            <person name="Fujimori K."/>
            <person name="Tanai H."/>
            <person name="Kimata M."/>
            <person name="Watanabe M."/>
            <person name="Hiraoka S."/>
            <person name="Chiba Y."/>
            <person name="Ishida S."/>
            <person name="Ono Y."/>
            <person name="Takiguchi S."/>
            <person name="Watanabe S."/>
            <person name="Yosida M."/>
            <person name="Hotuta T."/>
            <person name="Kusano J."/>
            <person name="Kanehori K."/>
            <person name="Takahashi-Fujii A."/>
            <person name="Hara H."/>
            <person name="Tanase T.-O."/>
            <person name="Nomura Y."/>
            <person name="Togiya S."/>
            <person name="Komai F."/>
            <person name="Hara R."/>
            <person name="Takeuchi K."/>
            <person name="Arita M."/>
            <person name="Imose N."/>
            <person name="Musashino K."/>
            <person name="Yuuki H."/>
            <person name="Oshima A."/>
            <person name="Sasaki N."/>
            <person name="Aotsuka S."/>
            <person name="Yoshikawa Y."/>
            <person name="Matsunawa H."/>
            <person name="Ichihara T."/>
            <person name="Shiohata N."/>
            <person name="Sano S."/>
            <person name="Moriya S."/>
            <person name="Momiyama H."/>
            <person name="Satoh N."/>
            <person name="Takami S."/>
            <person name="Terashima Y."/>
            <person name="Suzuki O."/>
            <person name="Nakagawa S."/>
            <person name="Senoh A."/>
            <person name="Mizoguchi H."/>
            <person name="Goto Y."/>
            <person name="Shimizu F."/>
            <person name="Wakebe H."/>
            <person name="Hishigaki H."/>
            <person name="Watanabe T."/>
            <person name="Sugiyama A."/>
            <person name="Takemoto M."/>
            <person name="Kawakami B."/>
            <person name="Yamazaki M."/>
            <person name="Watanabe K."/>
            <person name="Kumagai A."/>
            <person name="Itakura S."/>
            <person name="Fukuzumi Y."/>
            <person name="Fujimori Y."/>
            <person name="Komiyama M."/>
            <person name="Tashiro H."/>
            <person name="Tanigami A."/>
            <person name="Fujiwara T."/>
            <person name="Ono T."/>
            <person name="Yamada K."/>
            <person name="Fujii Y."/>
            <person name="Ozaki K."/>
            <person name="Hirao M."/>
            <person name="Ohmori Y."/>
            <person name="Kawabata A."/>
            <person name="Hikiji T."/>
            <person name="Kobatake N."/>
            <person name="Inagaki H."/>
            <person name="Ikema Y."/>
            <person name="Okamoto S."/>
            <person name="Okitani R."/>
            <person name="Kawakami T."/>
            <person name="Noguchi S."/>
            <person name="Itoh T."/>
            <person name="Shigeta K."/>
            <person name="Senba T."/>
            <person name="Matsumura K."/>
            <person name="Nakajima Y."/>
            <person name="Mizuno T."/>
            <person name="Morinaga M."/>
            <person name="Sasaki M."/>
            <person name="Togashi T."/>
            <person name="Oyama M."/>
            <person name="Hata H."/>
            <person name="Watanabe M."/>
            <person name="Komatsu T."/>
            <person name="Mizushima-Sugano J."/>
            <person name="Satoh T."/>
            <person name="Shirai Y."/>
            <person name="Takahashi Y."/>
            <person name="Nakagawa K."/>
            <person name="Okumura K."/>
            <person name="Nagase T."/>
            <person name="Nomura N."/>
            <person name="Kikuchi H."/>
            <person name="Masuho Y."/>
            <person name="Yamashita R."/>
            <person name="Nakai K."/>
            <person name="Yada T."/>
            <person name="Nakamura Y."/>
            <person name="Ohara O."/>
            <person name="Isogai T."/>
            <person name="Sugano S."/>
        </authorList>
    </citation>
    <scope>NUCLEOTIDE SEQUENCE [LARGE SCALE MRNA]</scope>
    <source>
        <tissue>Placenta</tissue>
    </source>
</reference>
<reference key="3">
    <citation type="journal article" date="2004" name="Nature">
        <title>DNA sequence and analysis of human chromosome 9.</title>
        <authorList>
            <person name="Humphray S.J."/>
            <person name="Oliver K."/>
            <person name="Hunt A.R."/>
            <person name="Plumb R.W."/>
            <person name="Loveland J.E."/>
            <person name="Howe K.L."/>
            <person name="Andrews T.D."/>
            <person name="Searle S."/>
            <person name="Hunt S.E."/>
            <person name="Scott C.E."/>
            <person name="Jones M.C."/>
            <person name="Ainscough R."/>
            <person name="Almeida J.P."/>
            <person name="Ambrose K.D."/>
            <person name="Ashwell R.I.S."/>
            <person name="Babbage A.K."/>
            <person name="Babbage S."/>
            <person name="Bagguley C.L."/>
            <person name="Bailey J."/>
            <person name="Banerjee R."/>
            <person name="Barker D.J."/>
            <person name="Barlow K.F."/>
            <person name="Bates K."/>
            <person name="Beasley H."/>
            <person name="Beasley O."/>
            <person name="Bird C.P."/>
            <person name="Bray-Allen S."/>
            <person name="Brown A.J."/>
            <person name="Brown J.Y."/>
            <person name="Burford D."/>
            <person name="Burrill W."/>
            <person name="Burton J."/>
            <person name="Carder C."/>
            <person name="Carter N.P."/>
            <person name="Chapman J.C."/>
            <person name="Chen Y."/>
            <person name="Clarke G."/>
            <person name="Clark S.Y."/>
            <person name="Clee C.M."/>
            <person name="Clegg S."/>
            <person name="Collier R.E."/>
            <person name="Corby N."/>
            <person name="Crosier M."/>
            <person name="Cummings A.T."/>
            <person name="Davies J."/>
            <person name="Dhami P."/>
            <person name="Dunn M."/>
            <person name="Dutta I."/>
            <person name="Dyer L.W."/>
            <person name="Earthrowl M.E."/>
            <person name="Faulkner L."/>
            <person name="Fleming C.J."/>
            <person name="Frankish A."/>
            <person name="Frankland J.A."/>
            <person name="French L."/>
            <person name="Fricker D.G."/>
            <person name="Garner P."/>
            <person name="Garnett J."/>
            <person name="Ghori J."/>
            <person name="Gilbert J.G.R."/>
            <person name="Glison C."/>
            <person name="Grafham D.V."/>
            <person name="Gribble S."/>
            <person name="Griffiths C."/>
            <person name="Griffiths-Jones S."/>
            <person name="Grocock R."/>
            <person name="Guy J."/>
            <person name="Hall R.E."/>
            <person name="Hammond S."/>
            <person name="Harley J.L."/>
            <person name="Harrison E.S.I."/>
            <person name="Hart E.A."/>
            <person name="Heath P.D."/>
            <person name="Henderson C.D."/>
            <person name="Hopkins B.L."/>
            <person name="Howard P.J."/>
            <person name="Howden P.J."/>
            <person name="Huckle E."/>
            <person name="Johnson C."/>
            <person name="Johnson D."/>
            <person name="Joy A.A."/>
            <person name="Kay M."/>
            <person name="Keenan S."/>
            <person name="Kershaw J.K."/>
            <person name="Kimberley A.M."/>
            <person name="King A."/>
            <person name="Knights A."/>
            <person name="Laird G.K."/>
            <person name="Langford C."/>
            <person name="Lawlor S."/>
            <person name="Leongamornlert D.A."/>
            <person name="Leversha M."/>
            <person name="Lloyd C."/>
            <person name="Lloyd D.M."/>
            <person name="Lovell J."/>
            <person name="Martin S."/>
            <person name="Mashreghi-Mohammadi M."/>
            <person name="Matthews L."/>
            <person name="McLaren S."/>
            <person name="McLay K.E."/>
            <person name="McMurray A."/>
            <person name="Milne S."/>
            <person name="Nickerson T."/>
            <person name="Nisbett J."/>
            <person name="Nordsiek G."/>
            <person name="Pearce A.V."/>
            <person name="Peck A.I."/>
            <person name="Porter K.M."/>
            <person name="Pandian R."/>
            <person name="Pelan S."/>
            <person name="Phillimore B."/>
            <person name="Povey S."/>
            <person name="Ramsey Y."/>
            <person name="Rand V."/>
            <person name="Scharfe M."/>
            <person name="Sehra H.K."/>
            <person name="Shownkeen R."/>
            <person name="Sims S.K."/>
            <person name="Skuce C.D."/>
            <person name="Smith M."/>
            <person name="Steward C.A."/>
            <person name="Swarbreck D."/>
            <person name="Sycamore N."/>
            <person name="Tester J."/>
            <person name="Thorpe A."/>
            <person name="Tracey A."/>
            <person name="Tromans A."/>
            <person name="Thomas D.W."/>
            <person name="Wall M."/>
            <person name="Wallis J.M."/>
            <person name="West A.P."/>
            <person name="Whitehead S.L."/>
            <person name="Willey D.L."/>
            <person name="Williams S.A."/>
            <person name="Wilming L."/>
            <person name="Wray P.W."/>
            <person name="Young L."/>
            <person name="Ashurst J.L."/>
            <person name="Coulson A."/>
            <person name="Blocker H."/>
            <person name="Durbin R.M."/>
            <person name="Sulston J.E."/>
            <person name="Hubbard T."/>
            <person name="Jackson M.J."/>
            <person name="Bentley D.R."/>
            <person name="Beck S."/>
            <person name="Rogers J."/>
            <person name="Dunham I."/>
        </authorList>
    </citation>
    <scope>NUCLEOTIDE SEQUENCE [LARGE SCALE GENOMIC DNA]</scope>
</reference>
<reference key="4">
    <citation type="submission" date="2005-07" db="EMBL/GenBank/DDBJ databases">
        <authorList>
            <person name="Mural R.J."/>
            <person name="Istrail S."/>
            <person name="Sutton G.G."/>
            <person name="Florea L."/>
            <person name="Halpern A.L."/>
            <person name="Mobarry C.M."/>
            <person name="Lippert R."/>
            <person name="Walenz B."/>
            <person name="Shatkay H."/>
            <person name="Dew I."/>
            <person name="Miller J.R."/>
            <person name="Flanigan M.J."/>
            <person name="Edwards N.J."/>
            <person name="Bolanos R."/>
            <person name="Fasulo D."/>
            <person name="Halldorsson B.V."/>
            <person name="Hannenhalli S."/>
            <person name="Turner R."/>
            <person name="Yooseph S."/>
            <person name="Lu F."/>
            <person name="Nusskern D.R."/>
            <person name="Shue B.C."/>
            <person name="Zheng X.H."/>
            <person name="Zhong F."/>
            <person name="Delcher A.L."/>
            <person name="Huson D.H."/>
            <person name="Kravitz S.A."/>
            <person name="Mouchard L."/>
            <person name="Reinert K."/>
            <person name="Remington K.A."/>
            <person name="Clark A.G."/>
            <person name="Waterman M.S."/>
            <person name="Eichler E.E."/>
            <person name="Adams M.D."/>
            <person name="Hunkapiller M.W."/>
            <person name="Myers E.W."/>
            <person name="Venter J.C."/>
        </authorList>
    </citation>
    <scope>NUCLEOTIDE SEQUENCE [LARGE SCALE GENOMIC DNA]</scope>
</reference>
<reference key="5">
    <citation type="journal article" date="2004" name="Genome Res.">
        <title>The status, quality, and expansion of the NIH full-length cDNA project: the Mammalian Gene Collection (MGC).</title>
        <authorList>
            <consortium name="The MGC Project Team"/>
        </authorList>
    </citation>
    <scope>NUCLEOTIDE SEQUENCE [LARGE SCALE MRNA]</scope>
    <scope>VARIANT ASP-68</scope>
    <source>
        <tissue>Lung</tissue>
        <tissue>Placenta</tissue>
    </source>
</reference>
<reference key="6">
    <citation type="submission" date="2010-01" db="UniProtKB">
        <authorList>
            <person name="Bienvenut W.V."/>
        </authorList>
    </citation>
    <scope>PROTEIN SEQUENCE OF 2-11; 132-145; 150-166; 247-264 AND 299-315</scope>
    <scope>CLEAVAGE OF INITIATOR METHIONINE</scope>
    <scope>IDENTIFICATION BY MASS SPECTROMETRY</scope>
    <source>
        <tissue>Ovarian carcinoma</tissue>
    </source>
</reference>
<reference key="7">
    <citation type="journal article" date="2009" name="Science">
        <title>Lysine acetylation targets protein complexes and co-regulates major cellular functions.</title>
        <authorList>
            <person name="Choudhary C."/>
            <person name="Kumar C."/>
            <person name="Gnad F."/>
            <person name="Nielsen M.L."/>
            <person name="Rehman M."/>
            <person name="Walther T.C."/>
            <person name="Olsen J.V."/>
            <person name="Mann M."/>
        </authorList>
    </citation>
    <scope>ACETYLATION [LARGE SCALE ANALYSIS] AT LYS-79</scope>
    <scope>IDENTIFICATION BY MASS SPECTROMETRY [LARGE SCALE ANALYSIS]</scope>
</reference>
<reference key="8">
    <citation type="journal article" date="2011" name="BMC Syst. Biol.">
        <title>Initial characterization of the human central proteome.</title>
        <authorList>
            <person name="Burkard T.R."/>
            <person name="Planyavsky M."/>
            <person name="Kaupe I."/>
            <person name="Breitwieser F.P."/>
            <person name="Buerckstuemmer T."/>
            <person name="Bennett K.L."/>
            <person name="Superti-Furga G."/>
            <person name="Colinge J."/>
        </authorList>
    </citation>
    <scope>IDENTIFICATION BY MASS SPECTROMETRY [LARGE SCALE ANALYSIS]</scope>
</reference>
<reference key="9">
    <citation type="journal article" date="2012" name="Proc. Natl. Acad. Sci. U.S.A.">
        <title>N-terminal acetylome analyses and functional insights of the N-terminal acetyltransferase NatB.</title>
        <authorList>
            <person name="Van Damme P."/>
            <person name="Lasa M."/>
            <person name="Polevoda B."/>
            <person name="Gazquez C."/>
            <person name="Elosegui-Artola A."/>
            <person name="Kim D.S."/>
            <person name="De Juan-Pardo E."/>
            <person name="Demeyer K."/>
            <person name="Hole K."/>
            <person name="Larrea E."/>
            <person name="Timmerman E."/>
            <person name="Prieto J."/>
            <person name="Arnesen T."/>
            <person name="Sherman F."/>
            <person name="Gevaert K."/>
            <person name="Aldabe R."/>
        </authorList>
    </citation>
    <scope>IDENTIFICATION BY MASS SPECTROMETRY [LARGE SCALE ANALYSIS]</scope>
</reference>
<reference key="10">
    <citation type="journal article" date="2014" name="J. Proteomics">
        <title>An enzyme assisted RP-RPLC approach for in-depth analysis of human liver phosphoproteome.</title>
        <authorList>
            <person name="Bian Y."/>
            <person name="Song C."/>
            <person name="Cheng K."/>
            <person name="Dong M."/>
            <person name="Wang F."/>
            <person name="Huang J."/>
            <person name="Sun D."/>
            <person name="Wang L."/>
            <person name="Ye M."/>
            <person name="Zou H."/>
        </authorList>
    </citation>
    <scope>IDENTIFICATION BY MASS SPECTROMETRY [LARGE SCALE ANALYSIS]</scope>
    <source>
        <tissue>Liver</tissue>
    </source>
</reference>
<reference key="11">
    <citation type="journal article" date="2016" name="Nat. Genet.">
        <title>NANS-mediated synthesis of sialic acid is required for brain and skeletal development.</title>
        <authorList>
            <person name="van Karnebeek C.D."/>
            <person name="Bonafe L."/>
            <person name="Wen X.Y."/>
            <person name="Tarailo-Graovac M."/>
            <person name="Balzano S."/>
            <person name="Royer-Bertrand B."/>
            <person name="Ashikov A."/>
            <person name="Garavelli L."/>
            <person name="Mammi I."/>
            <person name="Turolla L."/>
            <person name="Breen C."/>
            <person name="Donnai D."/>
            <person name="Cormier V."/>
            <person name="Heron D."/>
            <person name="Nishimura G."/>
            <person name="Uchikawa S."/>
            <person name="Campos-Xavier B."/>
            <person name="Rossi A."/>
            <person name="Hennet T."/>
            <person name="Brand-Arzamendi K."/>
            <person name="Rozmus J."/>
            <person name="Harshman K."/>
            <person name="Stevenson B.J."/>
            <person name="Girardi E."/>
            <person name="Superti-Furga G."/>
            <person name="Dewan T."/>
            <person name="Collingridge A."/>
            <person name="Halparin J."/>
            <person name="Ross C.J."/>
            <person name="Van Allen M.I."/>
            <person name="Rossi A."/>
            <person name="Engelke U.F."/>
            <person name="Kluijtmans L.A."/>
            <person name="van der Heeft E."/>
            <person name="Renkema H."/>
            <person name="de Brouwer A."/>
            <person name="Huijben K."/>
            <person name="Zijlstra F."/>
            <person name="Heisse T."/>
            <person name="Boltje T."/>
            <person name="Wasserman W.W."/>
            <person name="Rivolta C."/>
            <person name="Unger S."/>
            <person name="Lefeber D.J."/>
            <person name="Wevers R.A."/>
            <person name="Superti-Furga A."/>
        </authorList>
    </citation>
    <scope>INVOLVEMENT IN SEMDG</scope>
    <scope>VARIANTS SEMDG ASN-29; VAL-133; HIS-151; HIS-188; LEU-189; CYS-237 AND ILE-327 INS</scope>
    <scope>FUNCTION</scope>
</reference>
<reference key="12">
    <citation type="journal article" date="2006" name="Protein Sci.">
        <title>Solution structure of the antifreeze-like domain of human sialic acid synthase.</title>
        <authorList>
            <person name="Hamada T."/>
            <person name="Ito Y."/>
            <person name="Abe T."/>
            <person name="Hayashi F."/>
            <person name="Guentert P."/>
            <person name="Inoue M."/>
            <person name="Kigawa T."/>
            <person name="Terada T."/>
            <person name="Shirouzu M."/>
            <person name="Yoshida M."/>
            <person name="Tanaka A."/>
            <person name="Sugano S."/>
            <person name="Yokoyama S."/>
            <person name="Hirota H."/>
        </authorList>
    </citation>
    <scope>STRUCTURE BY NMR OF 294-359</scope>
</reference>
<proteinExistence type="evidence at protein level"/>
<feature type="initiator methionine" description="Removed" evidence="6">
    <location>
        <position position="1"/>
    </location>
</feature>
<feature type="chain" id="PRO_0000097750" description="N-acetylneuraminate-9-phosphate synthase">
    <location>
        <begin position="2"/>
        <end position="359"/>
    </location>
</feature>
<feature type="domain" description="AFP-like" evidence="2">
    <location>
        <begin position="294"/>
        <end position="353"/>
    </location>
</feature>
<feature type="modified residue" description="N6-acetyllysine" evidence="1">
    <location>
        <position position="61"/>
    </location>
</feature>
<feature type="modified residue" description="N6-acetyllysine" evidence="1">
    <location>
        <position position="74"/>
    </location>
</feature>
<feature type="modified residue" description="N6-acetyllysine" evidence="13">
    <location>
        <position position="79"/>
    </location>
</feature>
<feature type="modified residue" description="Phosphoserine" evidence="1">
    <location>
        <position position="275"/>
    </location>
</feature>
<feature type="modified residue" description="N6-acetyllysine" evidence="1">
    <location>
        <position position="290"/>
    </location>
</feature>
<feature type="sequence variant" id="VAR_076571" description="In SEMDG; dbSNP:rs1277263564." evidence="5">
    <original>H</original>
    <variation>N</variation>
    <location>
        <position position="29"/>
    </location>
</feature>
<feature type="sequence variant" id="VAR_013308" description="In dbSNP:rs1058446." evidence="4">
    <original>E</original>
    <variation>D</variation>
    <location>
        <position position="68"/>
    </location>
</feature>
<feature type="sequence variant" id="VAR_076572" description="In SEMDG; dbSNP:rs878852980." evidence="5">
    <original>G</original>
    <variation>V</variation>
    <location>
        <position position="133"/>
    </location>
</feature>
<feature type="sequence variant" id="VAR_076573" description="In SEMDG; dbSNP:rs140402727." evidence="5">
    <original>R</original>
    <variation>H</variation>
    <location>
        <position position="151"/>
    </location>
</feature>
<feature type="sequence variant" id="VAR_076574" description="In SEMDG; dbSNP:rs878852981." evidence="5">
    <original>Y</original>
    <variation>H</variation>
    <location>
        <position position="188"/>
    </location>
</feature>
<feature type="sequence variant" id="VAR_076575" description="In SEMDG; dbSNP:rs1024025721." evidence="5">
    <original>P</original>
    <variation>L</variation>
    <location>
        <position position="189"/>
    </location>
</feature>
<feature type="sequence variant" id="VAR_076576" description="In SEMDG; dbSNP:rs878852982." evidence="5">
    <original>R</original>
    <variation>C</variation>
    <location>
        <position position="237"/>
    </location>
</feature>
<feature type="sequence variant" id="VAR_076577" description="In SEMDG." evidence="5">
    <original>I</original>
    <variation>II</variation>
    <location>
        <position position="327"/>
    </location>
</feature>
<feature type="sequence conflict" description="In Ref. 2; BAA91818." evidence="10" ref="2">
    <original>A</original>
    <variation>T</variation>
    <location>
        <position position="232"/>
    </location>
</feature>
<feature type="sequence conflict" description="In Ref. 1; AAF75261." evidence="10" ref="1">
    <original>G</original>
    <variation>A</variation>
    <location>
        <position position="321"/>
    </location>
</feature>
<feature type="strand" evidence="14">
    <location>
        <begin position="294"/>
        <end position="299"/>
    </location>
</feature>
<feature type="helix" evidence="14">
    <location>
        <begin position="309"/>
        <end position="311"/>
    </location>
</feature>
<feature type="strand" evidence="14">
    <location>
        <begin position="312"/>
        <end position="315"/>
    </location>
</feature>
<feature type="strand" evidence="14">
    <location>
        <begin position="324"/>
        <end position="326"/>
    </location>
</feature>
<feature type="helix" evidence="14">
    <location>
        <begin position="327"/>
        <end position="330"/>
    </location>
</feature>
<feature type="strand" evidence="14">
    <location>
        <begin position="334"/>
        <end position="337"/>
    </location>
</feature>
<feature type="helix" evidence="14">
    <location>
        <begin position="347"/>
        <end position="349"/>
    </location>
</feature>
<feature type="strand" evidence="14">
    <location>
        <begin position="356"/>
        <end position="358"/>
    </location>
</feature>
<organism>
    <name type="scientific">Homo sapiens</name>
    <name type="common">Human</name>
    <dbReference type="NCBI Taxonomy" id="9606"/>
    <lineage>
        <taxon>Eukaryota</taxon>
        <taxon>Metazoa</taxon>
        <taxon>Chordata</taxon>
        <taxon>Craniata</taxon>
        <taxon>Vertebrata</taxon>
        <taxon>Euteleostomi</taxon>
        <taxon>Mammalia</taxon>
        <taxon>Eutheria</taxon>
        <taxon>Euarchontoglires</taxon>
        <taxon>Primates</taxon>
        <taxon>Haplorrhini</taxon>
        <taxon>Catarrhini</taxon>
        <taxon>Hominidae</taxon>
        <taxon>Homo</taxon>
    </lineage>
</organism>
<keyword id="KW-0002">3D-structure</keyword>
<keyword id="KW-0007">Acetylation</keyword>
<keyword id="KW-0903">Direct protein sequencing</keyword>
<keyword id="KW-0225">Disease variant</keyword>
<keyword id="KW-0242">Dwarfism</keyword>
<keyword id="KW-0991">Intellectual disability</keyword>
<keyword id="KW-0597">Phosphoprotein</keyword>
<keyword id="KW-1267">Proteomics identification</keyword>
<keyword id="KW-1185">Reference proteome</keyword>
<keyword id="KW-0808">Transferase</keyword>
<comment type="function">
    <text evidence="3 5">Catalyzes the condensation of phosphoenolpyruvate (PEP) and N-acetylmannosamine 6-phosphate (ManNAc-6-P) to synthesize N-acetylneuraminate-9-phosphate (Neu5Ac-9-P) (PubMed:10749855). Also catalyzes the condensation of PEP and D-mannose 6-phosphate (Man-6-P) to produce 3-deoxy-D-glycero-beta-D-galacto-non-2-ulopyranosonate 9-phosphate (KDN-9-P) (PubMed:10749855). Neu5Ac-9-P and KDN-9-P are the phosphorylated forms of sialic acids N-acetylneuraminic acid (Neu5Ac) and deaminoneuraminic acid (KDN), respectively (PubMed:10749855). Required for brain and skeletal development (PubMed:27213289).</text>
</comment>
<comment type="catalytic activity">
    <reaction evidence="3">
        <text>aldehydo-N-acetyl-D-mannosamine 6-phosphate + phosphoenolpyruvate + H2O = N-acetylneuraminate 9-phosphate + phosphate</text>
        <dbReference type="Rhea" id="RHEA:80835"/>
        <dbReference type="ChEBI" id="CHEBI:15377"/>
        <dbReference type="ChEBI" id="CHEBI:43474"/>
        <dbReference type="ChEBI" id="CHEBI:58557"/>
        <dbReference type="ChEBI" id="CHEBI:58702"/>
        <dbReference type="ChEBI" id="CHEBI:231734"/>
        <dbReference type="EC" id="2.5.1.57"/>
    </reaction>
    <physiologicalReaction direction="left-to-right" evidence="11">
        <dbReference type="Rhea" id="RHEA:80836"/>
    </physiologicalReaction>
</comment>
<comment type="catalytic activity">
    <reaction evidence="3">
        <text>aldehydo-D-mannose 6-phosphate + phosphoenolpyruvate + H2O = 3-deoxy-D-glycero-beta-D-galacto-non-2-ulopyranosonate 9-phosphate + phosphate</text>
        <dbReference type="Rhea" id="RHEA:49200"/>
        <dbReference type="ChEBI" id="CHEBI:15377"/>
        <dbReference type="ChEBI" id="CHEBI:43474"/>
        <dbReference type="ChEBI" id="CHEBI:58702"/>
        <dbReference type="ChEBI" id="CHEBI:90987"/>
        <dbReference type="ChEBI" id="CHEBI:231735"/>
        <dbReference type="EC" id="2.5.1.132"/>
    </reaction>
    <physiologicalReaction direction="left-to-right" evidence="11">
        <dbReference type="Rhea" id="RHEA:49201"/>
    </physiologicalReaction>
</comment>
<comment type="tissue specificity">
    <text evidence="3">Ubiquitous.</text>
</comment>
<comment type="disease" evidence="5">
    <disease id="DI-04730">
        <name>Spondyloepimetaphyseal dysplasia, Genevieve type</name>
        <acronym>SEMDG</acronym>
        <description>An autosomal recessive disorder characterized by global developmental delay with infantile onset, intellectual disability, skeletal dysplasia, and short stature. Skeletal findings include flat vertebral bodies with irregular vertebral plates, irregular and flared metaphyses with vertical striations, small and irregular epiphyses, premature carpal ossification and small carpal bones.</description>
        <dbReference type="MIM" id="610442"/>
    </disease>
    <text>The disease is caused by variants affecting the gene represented in this entry.</text>
</comment>
<comment type="caution">
    <text evidence="3">Does not exhibit sialic acid synthase activity, which catalyzes the synthesis of Neu5Ac and deaminoneuraminic acid (KDN) from N-acetylmannosamine (ManNAc) and mannose, respectively.</text>
</comment>
<name>SIAS_HUMAN</name>
<dbReference type="EC" id="2.5.1.57" evidence="3"/>
<dbReference type="EC" id="2.5.1.132" evidence="3"/>
<dbReference type="EMBL" id="AF257466">
    <property type="protein sequence ID" value="AAF75261.1"/>
    <property type="molecule type" value="mRNA"/>
</dbReference>
<dbReference type="EMBL" id="AK001659">
    <property type="protein sequence ID" value="BAA91818.1"/>
    <property type="molecule type" value="mRNA"/>
</dbReference>
<dbReference type="EMBL" id="AK316608">
    <property type="protein sequence ID" value="BAG38195.1"/>
    <property type="molecule type" value="mRNA"/>
</dbReference>
<dbReference type="EMBL" id="AL137073">
    <property type="status" value="NOT_ANNOTATED_CDS"/>
    <property type="molecule type" value="Genomic_DNA"/>
</dbReference>
<dbReference type="EMBL" id="CH471105">
    <property type="protein sequence ID" value="EAW58867.1"/>
    <property type="molecule type" value="Genomic_DNA"/>
</dbReference>
<dbReference type="EMBL" id="BC000008">
    <property type="protein sequence ID" value="AAH00008.1"/>
    <property type="molecule type" value="mRNA"/>
</dbReference>
<dbReference type="EMBL" id="BC019315">
    <property type="protein sequence ID" value="AAH19315.1"/>
    <property type="molecule type" value="mRNA"/>
</dbReference>
<dbReference type="CCDS" id="CCDS6733.1"/>
<dbReference type="RefSeq" id="NP_061819.2">
    <property type="nucleotide sequence ID" value="NM_018946.3"/>
</dbReference>
<dbReference type="RefSeq" id="XP_054219089.1">
    <property type="nucleotide sequence ID" value="XM_054363114.1"/>
</dbReference>
<dbReference type="PDB" id="1WVO">
    <property type="method" value="NMR"/>
    <property type="chains" value="A=294-359"/>
</dbReference>
<dbReference type="PDBsum" id="1WVO"/>
<dbReference type="SMR" id="Q9NR45"/>
<dbReference type="BioGRID" id="119921">
    <property type="interactions" value="102"/>
</dbReference>
<dbReference type="FunCoup" id="Q9NR45">
    <property type="interactions" value="968"/>
</dbReference>
<dbReference type="IntAct" id="Q9NR45">
    <property type="interactions" value="35"/>
</dbReference>
<dbReference type="MINT" id="Q9NR45"/>
<dbReference type="STRING" id="9606.ENSP00000210444"/>
<dbReference type="GlyGen" id="Q9NR45">
    <property type="glycosylation" value="2 sites, 1 O-linked glycan (1 site)"/>
</dbReference>
<dbReference type="iPTMnet" id="Q9NR45"/>
<dbReference type="MetOSite" id="Q9NR45"/>
<dbReference type="PhosphoSitePlus" id="Q9NR45"/>
<dbReference type="SwissPalm" id="Q9NR45"/>
<dbReference type="BioMuta" id="NANS"/>
<dbReference type="DMDM" id="20978759"/>
<dbReference type="REPRODUCTION-2DPAGE" id="IPI00147874"/>
<dbReference type="jPOST" id="Q9NR45"/>
<dbReference type="MassIVE" id="Q9NR45"/>
<dbReference type="PaxDb" id="9606-ENSP00000210444"/>
<dbReference type="PeptideAtlas" id="Q9NR45"/>
<dbReference type="ProteomicsDB" id="82270"/>
<dbReference type="Pumba" id="Q9NR45"/>
<dbReference type="Antibodypedia" id="14440">
    <property type="antibodies" value="218 antibodies from 26 providers"/>
</dbReference>
<dbReference type="DNASU" id="54187"/>
<dbReference type="Ensembl" id="ENST00000210444.6">
    <property type="protein sequence ID" value="ENSP00000210444.5"/>
    <property type="gene ID" value="ENSG00000095380.11"/>
</dbReference>
<dbReference type="GeneID" id="54187"/>
<dbReference type="KEGG" id="hsa:54187"/>
<dbReference type="MANE-Select" id="ENST00000210444.6">
    <property type="protein sequence ID" value="ENSP00000210444.5"/>
    <property type="RefSeq nucleotide sequence ID" value="NM_018946.4"/>
    <property type="RefSeq protein sequence ID" value="NP_061819.2"/>
</dbReference>
<dbReference type="UCSC" id="uc004ayc.4">
    <property type="organism name" value="human"/>
</dbReference>
<dbReference type="AGR" id="HGNC:19237"/>
<dbReference type="CTD" id="54187"/>
<dbReference type="DisGeNET" id="54187"/>
<dbReference type="GeneCards" id="NANS"/>
<dbReference type="HGNC" id="HGNC:19237">
    <property type="gene designation" value="NANS"/>
</dbReference>
<dbReference type="HPA" id="ENSG00000095380">
    <property type="expression patterns" value="Low tissue specificity"/>
</dbReference>
<dbReference type="MalaCards" id="NANS"/>
<dbReference type="MIM" id="605202">
    <property type="type" value="gene"/>
</dbReference>
<dbReference type="MIM" id="610442">
    <property type="type" value="phenotype"/>
</dbReference>
<dbReference type="neXtProt" id="NX_Q9NR45"/>
<dbReference type="OpenTargets" id="ENSG00000095380"/>
<dbReference type="Orphanet" id="168454">
    <property type="disease" value="Spondyloepimetaphyseal dysplasia, Genevieve type"/>
</dbReference>
<dbReference type="PharmGKB" id="PA134978885"/>
<dbReference type="VEuPathDB" id="HostDB:ENSG00000095380"/>
<dbReference type="eggNOG" id="ENOG502QR5J">
    <property type="taxonomic scope" value="Eukaryota"/>
</dbReference>
<dbReference type="GeneTree" id="ENSGT00390000011081"/>
<dbReference type="HOGENOM" id="CLU_040465_1_0_1"/>
<dbReference type="InParanoid" id="Q9NR45"/>
<dbReference type="OMA" id="MTYIDYR"/>
<dbReference type="OrthoDB" id="9928645at2759"/>
<dbReference type="PAN-GO" id="Q9NR45">
    <property type="GO annotations" value="2 GO annotations based on evolutionary models"/>
</dbReference>
<dbReference type="PhylomeDB" id="Q9NR45"/>
<dbReference type="TreeFam" id="TF324826"/>
<dbReference type="BioCyc" id="MetaCyc:HS01818-MONOMER"/>
<dbReference type="BRENDA" id="2.5.1.132">
    <property type="organism ID" value="2681"/>
</dbReference>
<dbReference type="BRENDA" id="2.5.1.56">
    <property type="organism ID" value="2681"/>
</dbReference>
<dbReference type="BRENDA" id="2.5.1.57">
    <property type="organism ID" value="2681"/>
</dbReference>
<dbReference type="PathwayCommons" id="Q9NR45"/>
<dbReference type="Reactome" id="R-HSA-4085001">
    <property type="pathway name" value="Sialic acid metabolism"/>
</dbReference>
<dbReference type="SignaLink" id="Q9NR45"/>
<dbReference type="BioGRID-ORCS" id="54187">
    <property type="hits" value="32 hits in 1155 CRISPR screens"/>
</dbReference>
<dbReference type="ChiTaRS" id="NANS">
    <property type="organism name" value="human"/>
</dbReference>
<dbReference type="EvolutionaryTrace" id="Q9NR45"/>
<dbReference type="GeneWiki" id="NANS"/>
<dbReference type="GenomeRNAi" id="54187"/>
<dbReference type="Pharos" id="Q9NR45">
    <property type="development level" value="Tbio"/>
</dbReference>
<dbReference type="PRO" id="PR:Q9NR45"/>
<dbReference type="Proteomes" id="UP000005640">
    <property type="component" value="Chromosome 9"/>
</dbReference>
<dbReference type="RNAct" id="Q9NR45">
    <property type="molecule type" value="protein"/>
</dbReference>
<dbReference type="Bgee" id="ENSG00000095380">
    <property type="expression patterns" value="Expressed in mucosa of sigmoid colon and 202 other cell types or tissues"/>
</dbReference>
<dbReference type="ExpressionAtlas" id="Q9NR45">
    <property type="expression patterns" value="baseline and differential"/>
</dbReference>
<dbReference type="GO" id="GO:0005737">
    <property type="term" value="C:cytoplasm"/>
    <property type="evidence" value="ECO:0000303"/>
    <property type="project" value="UniProtKB"/>
</dbReference>
<dbReference type="GO" id="GO:0005829">
    <property type="term" value="C:cytosol"/>
    <property type="evidence" value="ECO:0000304"/>
    <property type="project" value="Reactome"/>
</dbReference>
<dbReference type="GO" id="GO:0070062">
    <property type="term" value="C:extracellular exosome"/>
    <property type="evidence" value="ECO:0007005"/>
    <property type="project" value="UniProtKB"/>
</dbReference>
<dbReference type="GO" id="GO:0050462">
    <property type="term" value="F:N-acetylneuraminate synthase activity"/>
    <property type="evidence" value="ECO:0007669"/>
    <property type="project" value="UniProtKB-EC"/>
</dbReference>
<dbReference type="GO" id="GO:0047444">
    <property type="term" value="F:N-acylneuraminate-9-phosphate synthase activity"/>
    <property type="evidence" value="ECO:0000314"/>
    <property type="project" value="UniProtKB"/>
</dbReference>
<dbReference type="GO" id="GO:0016051">
    <property type="term" value="P:carbohydrate biosynthetic process"/>
    <property type="evidence" value="ECO:0007669"/>
    <property type="project" value="InterPro"/>
</dbReference>
<dbReference type="GO" id="GO:0006055">
    <property type="term" value="P:CMP-N-acetylneuraminate biosynthetic process"/>
    <property type="evidence" value="ECO:0000315"/>
    <property type="project" value="FlyBase"/>
</dbReference>
<dbReference type="GO" id="GO:0070085">
    <property type="term" value="P:glycosylation"/>
    <property type="evidence" value="ECO:0000315"/>
    <property type="project" value="FlyBase"/>
</dbReference>
<dbReference type="GO" id="GO:0046380">
    <property type="term" value="P:N-acetylneuraminate biosynthetic process"/>
    <property type="evidence" value="ECO:0000315"/>
    <property type="project" value="FlyBase"/>
</dbReference>
<dbReference type="CDD" id="cd11615">
    <property type="entry name" value="SAF_NeuB_like"/>
    <property type="match status" value="1"/>
</dbReference>
<dbReference type="FunFam" id="3.90.1210.10:FF:000002">
    <property type="entry name" value="Sialic acid synthase"/>
    <property type="match status" value="1"/>
</dbReference>
<dbReference type="FunFam" id="3.20.20.70:FF:000144">
    <property type="entry name" value="sialic acid synthase"/>
    <property type="match status" value="1"/>
</dbReference>
<dbReference type="Gene3D" id="3.20.20.70">
    <property type="entry name" value="Aldolase class I"/>
    <property type="match status" value="1"/>
</dbReference>
<dbReference type="Gene3D" id="3.90.1210.10">
    <property type="entry name" value="Antifreeze-like/N-acetylneuraminic acid synthase C-terminal domain"/>
    <property type="match status" value="1"/>
</dbReference>
<dbReference type="InterPro" id="IPR006190">
    <property type="entry name" value="AFP_Neu5c_C"/>
</dbReference>
<dbReference type="InterPro" id="IPR036732">
    <property type="entry name" value="AFP_Neu5c_C_sf"/>
</dbReference>
<dbReference type="InterPro" id="IPR013785">
    <property type="entry name" value="Aldolase_TIM"/>
</dbReference>
<dbReference type="InterPro" id="IPR006013">
    <property type="entry name" value="Antifreeze_III"/>
</dbReference>
<dbReference type="InterPro" id="IPR013132">
    <property type="entry name" value="Neu5Ac_N"/>
</dbReference>
<dbReference type="InterPro" id="IPR051690">
    <property type="entry name" value="Nonulosonic_Acid_Synth"/>
</dbReference>
<dbReference type="InterPro" id="IPR013974">
    <property type="entry name" value="SAF"/>
</dbReference>
<dbReference type="PANTHER" id="PTHR42966">
    <property type="entry name" value="N-ACETYLNEURAMINATE SYNTHASE"/>
    <property type="match status" value="1"/>
</dbReference>
<dbReference type="PANTHER" id="PTHR42966:SF1">
    <property type="entry name" value="SIALIC ACID SYNTHASE"/>
    <property type="match status" value="1"/>
</dbReference>
<dbReference type="Pfam" id="PF03102">
    <property type="entry name" value="NeuB"/>
    <property type="match status" value="1"/>
</dbReference>
<dbReference type="Pfam" id="PF08666">
    <property type="entry name" value="SAF"/>
    <property type="match status" value="1"/>
</dbReference>
<dbReference type="PRINTS" id="PR00357">
    <property type="entry name" value="ANTIFREEZIII"/>
</dbReference>
<dbReference type="SMART" id="SM00858">
    <property type="entry name" value="SAF"/>
    <property type="match status" value="1"/>
</dbReference>
<dbReference type="SUPFAM" id="SSF51269">
    <property type="entry name" value="AFP III-like domain"/>
    <property type="match status" value="1"/>
</dbReference>
<dbReference type="SUPFAM" id="SSF51569">
    <property type="entry name" value="Aldolase"/>
    <property type="match status" value="1"/>
</dbReference>
<dbReference type="PROSITE" id="PS50844">
    <property type="entry name" value="AFP_LIKE"/>
    <property type="match status" value="1"/>
</dbReference>
<protein>
    <recommendedName>
        <fullName evidence="7">N-acetylneuraminate-9-phosphate synthase</fullName>
        <ecNumber evidence="3">2.5.1.57</ecNumber>
    </recommendedName>
    <alternativeName>
        <fullName>3-deoxy-D-glycero-D-galacto-nononate 9-phosphate synthase</fullName>
        <ecNumber evidence="3">2.5.1.132</ecNumber>
    </alternativeName>
    <alternativeName>
        <fullName evidence="7">N-acetylneuraminic acid phosphate synthase</fullName>
        <shortName evidence="9">NANS</shortName>
    </alternativeName>
    <alternativeName>
        <fullName evidence="8">Sialic acid phosphate synthase</fullName>
    </alternativeName>
    <alternativeName>
        <fullName>Sialic acid synthase</fullName>
    </alternativeName>
</protein>
<accession>Q9NR45</accession>
<accession>B2RE98</accession>
<accession>Q8WUV9</accession>
<accession>Q9BWS6</accession>
<accession>Q9NVD4</accession>
<gene>
    <name evidence="12" type="primary">NANS</name>
    <name type="synonym">SAS</name>
</gene>
<sequence>MPLELELCPGRWVGGQHPCFIIAEIGQNHQGDLDVAKRMIRMAKECGADCAKFQKSELEFKFNRKALERPYTSKHSWGKTYGEHKRHLEFSHDQYRELQRYAEEVGIFFTASGMDEMAVEFLHELNVPFFKVGSGDTNNFPYLEKTAKKGRPMVISSGMQSMDTMKQVYQIVKPLNPNFCFLQCTSAYPLQPEDVNLRVISEYQKLFPDIPIGYSGHETGIAISVAAVALGAKVLERHITLDKTWKGSDHSASLEPGELAELVRSVRLVERALGSPTKQLLPCEMACNEKLGKSVVAKVKIPEGTILTMDMLTVKVGEPKGYPPEDIFNLVGKKVLVTVEEDDTIMEELVDNHGKKIKS</sequence>